<reference key="1">
    <citation type="journal article" date="2011" name="Stand. Genomic Sci.">
        <title>Complete genome sequence of 'Thioalkalivibrio sulfidophilus' HL-EbGr7.</title>
        <authorList>
            <person name="Muyzer G."/>
            <person name="Sorokin D.Y."/>
            <person name="Mavromatis K."/>
            <person name="Lapidus A."/>
            <person name="Clum A."/>
            <person name="Ivanova N."/>
            <person name="Pati A."/>
            <person name="d'Haeseleer P."/>
            <person name="Woyke T."/>
            <person name="Kyrpides N.C."/>
        </authorList>
    </citation>
    <scope>NUCLEOTIDE SEQUENCE [LARGE SCALE GENOMIC DNA]</scope>
    <source>
        <strain>HL-EbGR7</strain>
    </source>
</reference>
<sequence length="218" mass="22835">MNQDQMKKAAAEAAIEYVESGMIVGVGTGSTANHFIDLLAAIKDRIDGTVASSEASAQRLRGHGIQVMDLNTAGQLPLYVDGADESNAELHLIKGGGGALTREKIVAAASDKFVCIADESKLVDVLGAFPLPVEVIPMARAYVARELTKLGGQPVLREGFTTDNGNVILDVHNLQISDPVAMEDHINQLPGVVTVGIFAQRPADVLILGSAGGIRKIG</sequence>
<feature type="chain" id="PRO_1000194731" description="Ribose-5-phosphate isomerase A">
    <location>
        <begin position="1"/>
        <end position="218"/>
    </location>
</feature>
<feature type="active site" description="Proton acceptor" evidence="1">
    <location>
        <position position="103"/>
    </location>
</feature>
<feature type="binding site" evidence="1">
    <location>
        <begin position="28"/>
        <end position="31"/>
    </location>
    <ligand>
        <name>substrate</name>
    </ligand>
</feature>
<feature type="binding site" evidence="1">
    <location>
        <begin position="81"/>
        <end position="84"/>
    </location>
    <ligand>
        <name>substrate</name>
    </ligand>
</feature>
<feature type="binding site" evidence="1">
    <location>
        <begin position="94"/>
        <end position="97"/>
    </location>
    <ligand>
        <name>substrate</name>
    </ligand>
</feature>
<feature type="binding site" evidence="1">
    <location>
        <position position="121"/>
    </location>
    <ligand>
        <name>substrate</name>
    </ligand>
</feature>
<dbReference type="EC" id="5.3.1.6" evidence="1"/>
<dbReference type="EMBL" id="CP001339">
    <property type="protein sequence ID" value="ACL73849.1"/>
    <property type="molecule type" value="Genomic_DNA"/>
</dbReference>
<dbReference type="RefSeq" id="WP_012639324.1">
    <property type="nucleotide sequence ID" value="NC_011901.1"/>
</dbReference>
<dbReference type="SMR" id="B8GNF8"/>
<dbReference type="STRING" id="396588.Tgr7_2775"/>
<dbReference type="KEGG" id="tgr:Tgr7_2775"/>
<dbReference type="eggNOG" id="COG0120">
    <property type="taxonomic scope" value="Bacteria"/>
</dbReference>
<dbReference type="HOGENOM" id="CLU_056590_1_1_6"/>
<dbReference type="OrthoDB" id="5870696at2"/>
<dbReference type="UniPathway" id="UPA00115">
    <property type="reaction ID" value="UER00412"/>
</dbReference>
<dbReference type="Proteomes" id="UP000002383">
    <property type="component" value="Chromosome"/>
</dbReference>
<dbReference type="GO" id="GO:0005829">
    <property type="term" value="C:cytosol"/>
    <property type="evidence" value="ECO:0007669"/>
    <property type="project" value="TreeGrafter"/>
</dbReference>
<dbReference type="GO" id="GO:0004751">
    <property type="term" value="F:ribose-5-phosphate isomerase activity"/>
    <property type="evidence" value="ECO:0007669"/>
    <property type="project" value="UniProtKB-UniRule"/>
</dbReference>
<dbReference type="GO" id="GO:0006014">
    <property type="term" value="P:D-ribose metabolic process"/>
    <property type="evidence" value="ECO:0007669"/>
    <property type="project" value="TreeGrafter"/>
</dbReference>
<dbReference type="GO" id="GO:0009052">
    <property type="term" value="P:pentose-phosphate shunt, non-oxidative branch"/>
    <property type="evidence" value="ECO:0007669"/>
    <property type="project" value="UniProtKB-UniRule"/>
</dbReference>
<dbReference type="CDD" id="cd01398">
    <property type="entry name" value="RPI_A"/>
    <property type="match status" value="1"/>
</dbReference>
<dbReference type="FunFam" id="3.30.70.260:FF:000004">
    <property type="entry name" value="Ribose-5-phosphate isomerase A"/>
    <property type="match status" value="1"/>
</dbReference>
<dbReference type="FunFam" id="3.40.50.1360:FF:000001">
    <property type="entry name" value="Ribose-5-phosphate isomerase A"/>
    <property type="match status" value="1"/>
</dbReference>
<dbReference type="Gene3D" id="3.30.70.260">
    <property type="match status" value="1"/>
</dbReference>
<dbReference type="Gene3D" id="3.40.50.1360">
    <property type="match status" value="1"/>
</dbReference>
<dbReference type="HAMAP" id="MF_00170">
    <property type="entry name" value="Rib_5P_isom_A"/>
    <property type="match status" value="1"/>
</dbReference>
<dbReference type="InterPro" id="IPR037171">
    <property type="entry name" value="NagB/RpiA_transferase-like"/>
</dbReference>
<dbReference type="InterPro" id="IPR020672">
    <property type="entry name" value="Ribose5P_isomerase_typA_subgr"/>
</dbReference>
<dbReference type="InterPro" id="IPR004788">
    <property type="entry name" value="Ribose5P_isomerase_type_A"/>
</dbReference>
<dbReference type="NCBIfam" id="NF001924">
    <property type="entry name" value="PRK00702.1"/>
    <property type="match status" value="1"/>
</dbReference>
<dbReference type="NCBIfam" id="TIGR00021">
    <property type="entry name" value="rpiA"/>
    <property type="match status" value="1"/>
</dbReference>
<dbReference type="PANTHER" id="PTHR11934">
    <property type="entry name" value="RIBOSE-5-PHOSPHATE ISOMERASE"/>
    <property type="match status" value="1"/>
</dbReference>
<dbReference type="PANTHER" id="PTHR11934:SF0">
    <property type="entry name" value="RIBOSE-5-PHOSPHATE ISOMERASE"/>
    <property type="match status" value="1"/>
</dbReference>
<dbReference type="Pfam" id="PF06026">
    <property type="entry name" value="Rib_5-P_isom_A"/>
    <property type="match status" value="1"/>
</dbReference>
<dbReference type="SUPFAM" id="SSF75445">
    <property type="entry name" value="D-ribose-5-phosphate isomerase (RpiA), lid domain"/>
    <property type="match status" value="1"/>
</dbReference>
<dbReference type="SUPFAM" id="SSF100950">
    <property type="entry name" value="NagB/RpiA/CoA transferase-like"/>
    <property type="match status" value="1"/>
</dbReference>
<keyword id="KW-0413">Isomerase</keyword>
<keyword id="KW-1185">Reference proteome</keyword>
<name>RPIA_THISH</name>
<organism>
    <name type="scientific">Thioalkalivibrio sulfidiphilus (strain HL-EbGR7)</name>
    <dbReference type="NCBI Taxonomy" id="396588"/>
    <lineage>
        <taxon>Bacteria</taxon>
        <taxon>Pseudomonadati</taxon>
        <taxon>Pseudomonadota</taxon>
        <taxon>Gammaproteobacteria</taxon>
        <taxon>Chromatiales</taxon>
        <taxon>Ectothiorhodospiraceae</taxon>
        <taxon>Thioalkalivibrio</taxon>
    </lineage>
</organism>
<protein>
    <recommendedName>
        <fullName evidence="1">Ribose-5-phosphate isomerase A</fullName>
        <ecNumber evidence="1">5.3.1.6</ecNumber>
    </recommendedName>
    <alternativeName>
        <fullName evidence="1">Phosphoriboisomerase A</fullName>
        <shortName evidence="1">PRI</shortName>
    </alternativeName>
</protein>
<proteinExistence type="inferred from homology"/>
<gene>
    <name evidence="1" type="primary">rpiA</name>
    <name type="ordered locus">Tgr7_2775</name>
</gene>
<comment type="function">
    <text evidence="1">Catalyzes the reversible conversion of ribose-5-phosphate to ribulose 5-phosphate.</text>
</comment>
<comment type="catalytic activity">
    <reaction evidence="1">
        <text>aldehydo-D-ribose 5-phosphate = D-ribulose 5-phosphate</text>
        <dbReference type="Rhea" id="RHEA:14657"/>
        <dbReference type="ChEBI" id="CHEBI:58121"/>
        <dbReference type="ChEBI" id="CHEBI:58273"/>
        <dbReference type="EC" id="5.3.1.6"/>
    </reaction>
</comment>
<comment type="pathway">
    <text evidence="1">Carbohydrate degradation; pentose phosphate pathway; D-ribose 5-phosphate from D-ribulose 5-phosphate (non-oxidative stage): step 1/1.</text>
</comment>
<comment type="subunit">
    <text evidence="1">Homodimer.</text>
</comment>
<comment type="similarity">
    <text evidence="1">Belongs to the ribose 5-phosphate isomerase family.</text>
</comment>
<evidence type="ECO:0000255" key="1">
    <source>
        <dbReference type="HAMAP-Rule" id="MF_00170"/>
    </source>
</evidence>
<accession>B8GNF8</accession>